<evidence type="ECO:0000255" key="1">
    <source>
        <dbReference type="PROSITE-ProRule" id="PRU00267"/>
    </source>
</evidence>
<evidence type="ECO:0000256" key="2">
    <source>
        <dbReference type="SAM" id="MobiDB-lite"/>
    </source>
</evidence>
<evidence type="ECO:0000269" key="3">
    <source>
    </source>
</evidence>
<evidence type="ECO:0000305" key="4"/>
<sequence>MSGDRPKRPLSAYMLWLNETREQIKKDNPGSKVTDIAKRGGELWRGLKDKTEWEQKAIKMKEEYNKAVKEYEANGGTDSGAPKKRKKAAAKPAKKAKKKESSEEEEEDESE</sequence>
<organism>
    <name type="scientific">Drosophila melanogaster</name>
    <name type="common">Fruit fly</name>
    <dbReference type="NCBI Taxonomy" id="7227"/>
    <lineage>
        <taxon>Eukaryota</taxon>
        <taxon>Metazoa</taxon>
        <taxon>Ecdysozoa</taxon>
        <taxon>Arthropoda</taxon>
        <taxon>Hexapoda</taxon>
        <taxon>Insecta</taxon>
        <taxon>Pterygota</taxon>
        <taxon>Neoptera</taxon>
        <taxon>Endopterygota</taxon>
        <taxon>Diptera</taxon>
        <taxon>Brachycera</taxon>
        <taxon>Muscomorpha</taxon>
        <taxon>Ephydroidea</taxon>
        <taxon>Drosophilidae</taxon>
        <taxon>Drosophila</taxon>
        <taxon>Sophophora</taxon>
    </lineage>
</organism>
<accession>Q06943</accession>
<accession>Q0E8Z4</accession>
<accession>Q9W2D4</accession>
<keyword id="KW-0158">Chromosome</keyword>
<keyword id="KW-0238">DNA-binding</keyword>
<keyword id="KW-0539">Nucleus</keyword>
<keyword id="KW-0597">Phosphoprotein</keyword>
<keyword id="KW-1185">Reference proteome</keyword>
<feature type="chain" id="PRO_0000048553" description="High mobility group protein Z">
    <location>
        <begin position="1"/>
        <end position="111"/>
    </location>
</feature>
<feature type="DNA-binding region" description="HMG box" evidence="1">
    <location>
        <begin position="6"/>
        <end position="72"/>
    </location>
</feature>
<feature type="region of interest" description="Disordered" evidence="2">
    <location>
        <begin position="72"/>
        <end position="111"/>
    </location>
</feature>
<feature type="compositionally biased region" description="Basic residues" evidence="2">
    <location>
        <begin position="82"/>
        <end position="98"/>
    </location>
</feature>
<feature type="compositionally biased region" description="Acidic residues" evidence="2">
    <location>
        <begin position="102"/>
        <end position="111"/>
    </location>
</feature>
<feature type="modified residue" description="Phosphoserine" evidence="3">
    <location>
        <position position="11"/>
    </location>
</feature>
<protein>
    <recommendedName>
        <fullName>High mobility group protein Z</fullName>
        <shortName>HMG-Z</shortName>
    </recommendedName>
</protein>
<dbReference type="EMBL" id="X71139">
    <property type="protein sequence ID" value="CAA50469.1"/>
    <property type="molecule type" value="mRNA"/>
</dbReference>
<dbReference type="EMBL" id="AE013599">
    <property type="protein sequence ID" value="AAF46758.1"/>
    <property type="molecule type" value="Genomic_DNA"/>
</dbReference>
<dbReference type="EMBL" id="AY113439">
    <property type="protein sequence ID" value="AAM29444.1"/>
    <property type="molecule type" value="mRNA"/>
</dbReference>
<dbReference type="PIR" id="S41765">
    <property type="entry name" value="S41765"/>
</dbReference>
<dbReference type="RefSeq" id="NP_001286694.1">
    <property type="nucleotide sequence ID" value="NM_001299765.1"/>
</dbReference>
<dbReference type="RefSeq" id="NP_001286695.1">
    <property type="nucleotide sequence ID" value="NM_001299766.1"/>
</dbReference>
<dbReference type="RefSeq" id="NP_726106.1">
    <property type="nucleotide sequence ID" value="NM_166476.2"/>
</dbReference>
<dbReference type="RefSeq" id="NP_726107.1">
    <property type="nucleotide sequence ID" value="NM_166477.2"/>
</dbReference>
<dbReference type="SMR" id="Q06943"/>
<dbReference type="BioGRID" id="63105">
    <property type="interactions" value="6"/>
</dbReference>
<dbReference type="FunCoup" id="Q06943">
    <property type="interactions" value="15"/>
</dbReference>
<dbReference type="IntAct" id="Q06943">
    <property type="interactions" value="11"/>
</dbReference>
<dbReference type="STRING" id="7227.FBpp0309731"/>
<dbReference type="iPTMnet" id="Q06943"/>
<dbReference type="PaxDb" id="7227-FBpp0071590"/>
<dbReference type="DNASU" id="37480"/>
<dbReference type="EnsemblMetazoa" id="FBtr0071673">
    <property type="protein sequence ID" value="FBpp0071590"/>
    <property type="gene ID" value="FBgn0010228"/>
</dbReference>
<dbReference type="EnsemblMetazoa" id="FBtr0071674">
    <property type="protein sequence ID" value="FBpp0071591"/>
    <property type="gene ID" value="FBgn0010228"/>
</dbReference>
<dbReference type="EnsemblMetazoa" id="FBtr0342960">
    <property type="protein sequence ID" value="FBpp0309731"/>
    <property type="gene ID" value="FBgn0010228"/>
</dbReference>
<dbReference type="EnsemblMetazoa" id="FBtr0345488">
    <property type="protein sequence ID" value="FBpp0311599"/>
    <property type="gene ID" value="FBgn0010228"/>
</dbReference>
<dbReference type="GeneID" id="37480"/>
<dbReference type="KEGG" id="dme:Dmel_CG17921"/>
<dbReference type="AGR" id="FB:FBgn0010228"/>
<dbReference type="CTD" id="37480"/>
<dbReference type="FlyBase" id="FBgn0010228">
    <property type="gene designation" value="HmgZ"/>
</dbReference>
<dbReference type="VEuPathDB" id="VectorBase:FBgn0010228"/>
<dbReference type="eggNOG" id="KOG0381">
    <property type="taxonomic scope" value="Eukaryota"/>
</dbReference>
<dbReference type="GeneTree" id="ENSGT00940000167382"/>
<dbReference type="HOGENOM" id="CLU_082854_0_6_1"/>
<dbReference type="InParanoid" id="Q06943"/>
<dbReference type="OMA" id="YNKQMQD"/>
<dbReference type="OrthoDB" id="498543at2759"/>
<dbReference type="PhylomeDB" id="Q06943"/>
<dbReference type="BioGRID-ORCS" id="37480">
    <property type="hits" value="0 hits in 1 CRISPR screen"/>
</dbReference>
<dbReference type="ChiTaRS" id="HmgZ">
    <property type="organism name" value="fly"/>
</dbReference>
<dbReference type="GenomeRNAi" id="37480"/>
<dbReference type="PRO" id="PR:Q06943"/>
<dbReference type="Proteomes" id="UP000000803">
    <property type="component" value="Chromosome 2R"/>
</dbReference>
<dbReference type="Bgee" id="FBgn0010228">
    <property type="expression patterns" value="Expressed in T neuron T4c (Drosophila) in embryonic/larval optic lobe (Drosophila) and 275 other cell types or tissues"/>
</dbReference>
<dbReference type="ExpressionAtlas" id="Q06943">
    <property type="expression patterns" value="baseline and differential"/>
</dbReference>
<dbReference type="GO" id="GO:0005694">
    <property type="term" value="C:chromosome"/>
    <property type="evidence" value="ECO:0007669"/>
    <property type="project" value="UniProtKB-SubCell"/>
</dbReference>
<dbReference type="GO" id="GO:0005634">
    <property type="term" value="C:nucleus"/>
    <property type="evidence" value="ECO:0007669"/>
    <property type="project" value="UniProtKB-SubCell"/>
</dbReference>
<dbReference type="GO" id="GO:0008301">
    <property type="term" value="F:DNA binding, bending"/>
    <property type="evidence" value="ECO:0000318"/>
    <property type="project" value="GO_Central"/>
</dbReference>
<dbReference type="GO" id="GO:0006357">
    <property type="term" value="P:regulation of transcription by RNA polymerase II"/>
    <property type="evidence" value="ECO:0000318"/>
    <property type="project" value="GO_Central"/>
</dbReference>
<dbReference type="CDD" id="cd21994">
    <property type="entry name" value="HMG-box_SSRP1-like"/>
    <property type="match status" value="1"/>
</dbReference>
<dbReference type="FunFam" id="1.10.30.10:FF:000036">
    <property type="entry name" value="high mobility group protein D"/>
    <property type="match status" value="1"/>
</dbReference>
<dbReference type="Gene3D" id="1.10.30.10">
    <property type="entry name" value="High mobility group box domain"/>
    <property type="match status" value="1"/>
</dbReference>
<dbReference type="InterPro" id="IPR009071">
    <property type="entry name" value="HMG_box_dom"/>
</dbReference>
<dbReference type="InterPro" id="IPR036910">
    <property type="entry name" value="HMG_box_dom_sf"/>
</dbReference>
<dbReference type="InterPro" id="IPR050342">
    <property type="entry name" value="HMGB"/>
</dbReference>
<dbReference type="PANTHER" id="PTHR48112:SF20">
    <property type="entry name" value="HIGH MOBILITY GROUP PROTEIN D-RELATED"/>
    <property type="match status" value="1"/>
</dbReference>
<dbReference type="PANTHER" id="PTHR48112">
    <property type="entry name" value="HIGH MOBILITY GROUP PROTEIN DSP1"/>
    <property type="match status" value="1"/>
</dbReference>
<dbReference type="Pfam" id="PF00505">
    <property type="entry name" value="HMG_box"/>
    <property type="match status" value="1"/>
</dbReference>
<dbReference type="SMART" id="SM00398">
    <property type="entry name" value="HMG"/>
    <property type="match status" value="1"/>
</dbReference>
<dbReference type="SUPFAM" id="SSF47095">
    <property type="entry name" value="HMG-box"/>
    <property type="match status" value="1"/>
</dbReference>
<dbReference type="PROSITE" id="PS50118">
    <property type="entry name" value="HMG_BOX_2"/>
    <property type="match status" value="1"/>
</dbReference>
<name>HMGZ_DROME</name>
<reference key="1">
    <citation type="journal article" date="1993" name="Nucleic Acids Res.">
        <title>dHMG-Z, a second HMG-1-related protein in Drosophila melanogaster.</title>
        <authorList>
            <person name="Ner S.S."/>
            <person name="Churchill M.E.A."/>
            <person name="Searles M.A."/>
            <person name="Travers A.A."/>
        </authorList>
    </citation>
    <scope>NUCLEOTIDE SEQUENCE [MRNA]</scope>
    <source>
        <strain>Canton-S</strain>
    </source>
</reference>
<reference key="2">
    <citation type="journal article" date="2000" name="Science">
        <title>The genome sequence of Drosophila melanogaster.</title>
        <authorList>
            <person name="Adams M.D."/>
            <person name="Celniker S.E."/>
            <person name="Holt R.A."/>
            <person name="Evans C.A."/>
            <person name="Gocayne J.D."/>
            <person name="Amanatides P.G."/>
            <person name="Scherer S.E."/>
            <person name="Li P.W."/>
            <person name="Hoskins R.A."/>
            <person name="Galle R.F."/>
            <person name="George R.A."/>
            <person name="Lewis S.E."/>
            <person name="Richards S."/>
            <person name="Ashburner M."/>
            <person name="Henderson S.N."/>
            <person name="Sutton G.G."/>
            <person name="Wortman J.R."/>
            <person name="Yandell M.D."/>
            <person name="Zhang Q."/>
            <person name="Chen L.X."/>
            <person name="Brandon R.C."/>
            <person name="Rogers Y.-H.C."/>
            <person name="Blazej R.G."/>
            <person name="Champe M."/>
            <person name="Pfeiffer B.D."/>
            <person name="Wan K.H."/>
            <person name="Doyle C."/>
            <person name="Baxter E.G."/>
            <person name="Helt G."/>
            <person name="Nelson C.R."/>
            <person name="Miklos G.L.G."/>
            <person name="Abril J.F."/>
            <person name="Agbayani A."/>
            <person name="An H.-J."/>
            <person name="Andrews-Pfannkoch C."/>
            <person name="Baldwin D."/>
            <person name="Ballew R.M."/>
            <person name="Basu A."/>
            <person name="Baxendale J."/>
            <person name="Bayraktaroglu L."/>
            <person name="Beasley E.M."/>
            <person name="Beeson K.Y."/>
            <person name="Benos P.V."/>
            <person name="Berman B.P."/>
            <person name="Bhandari D."/>
            <person name="Bolshakov S."/>
            <person name="Borkova D."/>
            <person name="Botchan M.R."/>
            <person name="Bouck J."/>
            <person name="Brokstein P."/>
            <person name="Brottier P."/>
            <person name="Burtis K.C."/>
            <person name="Busam D.A."/>
            <person name="Butler H."/>
            <person name="Cadieu E."/>
            <person name="Center A."/>
            <person name="Chandra I."/>
            <person name="Cherry J.M."/>
            <person name="Cawley S."/>
            <person name="Dahlke C."/>
            <person name="Davenport L.B."/>
            <person name="Davies P."/>
            <person name="de Pablos B."/>
            <person name="Delcher A."/>
            <person name="Deng Z."/>
            <person name="Mays A.D."/>
            <person name="Dew I."/>
            <person name="Dietz S.M."/>
            <person name="Dodson K."/>
            <person name="Doup L.E."/>
            <person name="Downes M."/>
            <person name="Dugan-Rocha S."/>
            <person name="Dunkov B.C."/>
            <person name="Dunn P."/>
            <person name="Durbin K.J."/>
            <person name="Evangelista C.C."/>
            <person name="Ferraz C."/>
            <person name="Ferriera S."/>
            <person name="Fleischmann W."/>
            <person name="Fosler C."/>
            <person name="Gabrielian A.E."/>
            <person name="Garg N.S."/>
            <person name="Gelbart W.M."/>
            <person name="Glasser K."/>
            <person name="Glodek A."/>
            <person name="Gong F."/>
            <person name="Gorrell J.H."/>
            <person name="Gu Z."/>
            <person name="Guan P."/>
            <person name="Harris M."/>
            <person name="Harris N.L."/>
            <person name="Harvey D.A."/>
            <person name="Heiman T.J."/>
            <person name="Hernandez J.R."/>
            <person name="Houck J."/>
            <person name="Hostin D."/>
            <person name="Houston K.A."/>
            <person name="Howland T.J."/>
            <person name="Wei M.-H."/>
            <person name="Ibegwam C."/>
            <person name="Jalali M."/>
            <person name="Kalush F."/>
            <person name="Karpen G.H."/>
            <person name="Ke Z."/>
            <person name="Kennison J.A."/>
            <person name="Ketchum K.A."/>
            <person name="Kimmel B.E."/>
            <person name="Kodira C.D."/>
            <person name="Kraft C.L."/>
            <person name="Kravitz S."/>
            <person name="Kulp D."/>
            <person name="Lai Z."/>
            <person name="Lasko P."/>
            <person name="Lei Y."/>
            <person name="Levitsky A.A."/>
            <person name="Li J.H."/>
            <person name="Li Z."/>
            <person name="Liang Y."/>
            <person name="Lin X."/>
            <person name="Liu X."/>
            <person name="Mattei B."/>
            <person name="McIntosh T.C."/>
            <person name="McLeod M.P."/>
            <person name="McPherson D."/>
            <person name="Merkulov G."/>
            <person name="Milshina N.V."/>
            <person name="Mobarry C."/>
            <person name="Morris J."/>
            <person name="Moshrefi A."/>
            <person name="Mount S.M."/>
            <person name="Moy M."/>
            <person name="Murphy B."/>
            <person name="Murphy L."/>
            <person name="Muzny D.M."/>
            <person name="Nelson D.L."/>
            <person name="Nelson D.R."/>
            <person name="Nelson K.A."/>
            <person name="Nixon K."/>
            <person name="Nusskern D.R."/>
            <person name="Pacleb J.M."/>
            <person name="Palazzolo M."/>
            <person name="Pittman G.S."/>
            <person name="Pan S."/>
            <person name="Pollard J."/>
            <person name="Puri V."/>
            <person name="Reese M.G."/>
            <person name="Reinert K."/>
            <person name="Remington K."/>
            <person name="Saunders R.D.C."/>
            <person name="Scheeler F."/>
            <person name="Shen H."/>
            <person name="Shue B.C."/>
            <person name="Siden-Kiamos I."/>
            <person name="Simpson M."/>
            <person name="Skupski M.P."/>
            <person name="Smith T.J."/>
            <person name="Spier E."/>
            <person name="Spradling A.C."/>
            <person name="Stapleton M."/>
            <person name="Strong R."/>
            <person name="Sun E."/>
            <person name="Svirskas R."/>
            <person name="Tector C."/>
            <person name="Turner R."/>
            <person name="Venter E."/>
            <person name="Wang A.H."/>
            <person name="Wang X."/>
            <person name="Wang Z.-Y."/>
            <person name="Wassarman D.A."/>
            <person name="Weinstock G.M."/>
            <person name="Weissenbach J."/>
            <person name="Williams S.M."/>
            <person name="Woodage T."/>
            <person name="Worley K.C."/>
            <person name="Wu D."/>
            <person name="Yang S."/>
            <person name="Yao Q.A."/>
            <person name="Ye J."/>
            <person name="Yeh R.-F."/>
            <person name="Zaveri J.S."/>
            <person name="Zhan M."/>
            <person name="Zhang G."/>
            <person name="Zhao Q."/>
            <person name="Zheng L."/>
            <person name="Zheng X.H."/>
            <person name="Zhong F.N."/>
            <person name="Zhong W."/>
            <person name="Zhou X."/>
            <person name="Zhu S.C."/>
            <person name="Zhu X."/>
            <person name="Smith H.O."/>
            <person name="Gibbs R.A."/>
            <person name="Myers E.W."/>
            <person name="Rubin G.M."/>
            <person name="Venter J.C."/>
        </authorList>
    </citation>
    <scope>NUCLEOTIDE SEQUENCE [LARGE SCALE GENOMIC DNA]</scope>
    <source>
        <strain>Berkeley</strain>
    </source>
</reference>
<reference key="3">
    <citation type="journal article" date="2002" name="Genome Biol.">
        <title>Annotation of the Drosophila melanogaster euchromatic genome: a systematic review.</title>
        <authorList>
            <person name="Misra S."/>
            <person name="Crosby M.A."/>
            <person name="Mungall C.J."/>
            <person name="Matthews B.B."/>
            <person name="Campbell K.S."/>
            <person name="Hradecky P."/>
            <person name="Huang Y."/>
            <person name="Kaminker J.S."/>
            <person name="Millburn G.H."/>
            <person name="Prochnik S.E."/>
            <person name="Smith C.D."/>
            <person name="Tupy J.L."/>
            <person name="Whitfield E.J."/>
            <person name="Bayraktaroglu L."/>
            <person name="Berman B.P."/>
            <person name="Bettencourt B.R."/>
            <person name="Celniker S.E."/>
            <person name="de Grey A.D.N.J."/>
            <person name="Drysdale R.A."/>
            <person name="Harris N.L."/>
            <person name="Richter J."/>
            <person name="Russo S."/>
            <person name="Schroeder A.J."/>
            <person name="Shu S.Q."/>
            <person name="Stapleton M."/>
            <person name="Yamada C."/>
            <person name="Ashburner M."/>
            <person name="Gelbart W.M."/>
            <person name="Rubin G.M."/>
            <person name="Lewis S.E."/>
        </authorList>
    </citation>
    <scope>GENOME REANNOTATION</scope>
    <source>
        <strain>Berkeley</strain>
    </source>
</reference>
<reference key="4">
    <citation type="journal article" date="2002" name="Genome Biol.">
        <title>A Drosophila full-length cDNA resource.</title>
        <authorList>
            <person name="Stapleton M."/>
            <person name="Carlson J.W."/>
            <person name="Brokstein P."/>
            <person name="Yu C."/>
            <person name="Champe M."/>
            <person name="George R.A."/>
            <person name="Guarin H."/>
            <person name="Kronmiller B."/>
            <person name="Pacleb J.M."/>
            <person name="Park S."/>
            <person name="Wan K.H."/>
            <person name="Rubin G.M."/>
            <person name="Celniker S.E."/>
        </authorList>
    </citation>
    <scope>NUCLEOTIDE SEQUENCE [LARGE SCALE MRNA]</scope>
    <source>
        <strain>Berkeley</strain>
        <tissue>Embryo</tissue>
    </source>
</reference>
<reference key="5">
    <citation type="journal article" date="2008" name="J. Proteome Res.">
        <title>Phosphoproteome analysis of Drosophila melanogaster embryos.</title>
        <authorList>
            <person name="Zhai B."/>
            <person name="Villen J."/>
            <person name="Beausoleil S.A."/>
            <person name="Mintseris J."/>
            <person name="Gygi S.P."/>
        </authorList>
    </citation>
    <scope>PHOSPHORYLATION [LARGE SCALE ANALYSIS] AT SER-11</scope>
    <scope>IDENTIFICATION BY MASS SPECTROMETRY</scope>
    <source>
        <tissue>Embryo</tissue>
    </source>
</reference>
<gene>
    <name type="primary">HmgZ</name>
    <name type="ORF">CG17921</name>
</gene>
<proteinExistence type="evidence at protein level"/>
<comment type="subcellular location">
    <subcellularLocation>
        <location evidence="4">Nucleus</location>
    </subcellularLocation>
    <subcellularLocation>
        <location evidence="4">Chromosome</location>
    </subcellularLocation>
</comment>
<comment type="similarity">
    <text evidence="4">Belongs to the HMGB family.</text>
</comment>